<comment type="function">
    <text evidence="1">Binds directly to 16S ribosomal RNA.</text>
</comment>
<comment type="similarity">
    <text evidence="1">Belongs to the bacterial ribosomal protein bS20 family.</text>
</comment>
<sequence length="90" mass="9870">MANSKSAKKRILVAERNRVRNQAVKTRVKTMAKKVLSTIEVKDVEAAKVALSVAYKEFDKAVSKGILKKNTASRKKARLAAKVNSLVSSL</sequence>
<gene>
    <name evidence="1" type="primary">rpsT</name>
    <name type="ordered locus">FN1879</name>
</gene>
<evidence type="ECO:0000255" key="1">
    <source>
        <dbReference type="HAMAP-Rule" id="MF_00500"/>
    </source>
</evidence>
<evidence type="ECO:0000305" key="2"/>
<reference key="1">
    <citation type="journal article" date="2002" name="J. Bacteriol.">
        <title>Genome sequence and analysis of the oral bacterium Fusobacterium nucleatum strain ATCC 25586.</title>
        <authorList>
            <person name="Kapatral V."/>
            <person name="Anderson I."/>
            <person name="Ivanova N."/>
            <person name="Reznik G."/>
            <person name="Los T."/>
            <person name="Lykidis A."/>
            <person name="Bhattacharyya A."/>
            <person name="Bartman A."/>
            <person name="Gardner W."/>
            <person name="Grechkin G."/>
            <person name="Zhu L."/>
            <person name="Vasieva O."/>
            <person name="Chu L."/>
            <person name="Kogan Y."/>
            <person name="Chaga O."/>
            <person name="Goltsman E."/>
            <person name="Bernal A."/>
            <person name="Larsen N."/>
            <person name="D'Souza M."/>
            <person name="Walunas T."/>
            <person name="Pusch G."/>
            <person name="Haselkorn R."/>
            <person name="Fonstein M."/>
            <person name="Kyrpides N.C."/>
            <person name="Overbeek R."/>
        </authorList>
    </citation>
    <scope>NUCLEOTIDE SEQUENCE [LARGE SCALE GENOMIC DNA]</scope>
    <source>
        <strain>ATCC 25586 / DSM 15643 / BCRC 10681 / CIP 101130 / JCM 8532 / KCTC 2640 / LMG 13131 / VPI 4355</strain>
    </source>
</reference>
<organism>
    <name type="scientific">Fusobacterium nucleatum subsp. nucleatum (strain ATCC 25586 / DSM 15643 / BCRC 10681 / CIP 101130 / JCM 8532 / KCTC 2640 / LMG 13131 / VPI 4355)</name>
    <dbReference type="NCBI Taxonomy" id="190304"/>
    <lineage>
        <taxon>Bacteria</taxon>
        <taxon>Fusobacteriati</taxon>
        <taxon>Fusobacteriota</taxon>
        <taxon>Fusobacteriia</taxon>
        <taxon>Fusobacteriales</taxon>
        <taxon>Fusobacteriaceae</taxon>
        <taxon>Fusobacterium</taxon>
    </lineage>
</organism>
<dbReference type="EMBL" id="AE009951">
    <property type="protein sequence ID" value="AAL93978.1"/>
    <property type="molecule type" value="Genomic_DNA"/>
</dbReference>
<dbReference type="RefSeq" id="NP_602679.1">
    <property type="nucleotide sequence ID" value="NC_003454.1"/>
</dbReference>
<dbReference type="RefSeq" id="WP_005902954.1">
    <property type="nucleotide sequence ID" value="NZ_OZ209243.1"/>
</dbReference>
<dbReference type="SMR" id="Q8RHW1"/>
<dbReference type="FunCoup" id="Q8RHW1">
    <property type="interactions" value="298"/>
</dbReference>
<dbReference type="STRING" id="190304.FN1879"/>
<dbReference type="PaxDb" id="190304-FN1879"/>
<dbReference type="EnsemblBacteria" id="AAL93978">
    <property type="protein sequence ID" value="AAL93978"/>
    <property type="gene ID" value="FN1879"/>
</dbReference>
<dbReference type="GeneID" id="79783099"/>
<dbReference type="KEGG" id="fnu:FN1879"/>
<dbReference type="PATRIC" id="fig|190304.8.peg.355"/>
<dbReference type="eggNOG" id="COG0268">
    <property type="taxonomic scope" value="Bacteria"/>
</dbReference>
<dbReference type="HOGENOM" id="CLU_160655_0_0_0"/>
<dbReference type="InParanoid" id="Q8RHW1"/>
<dbReference type="BioCyc" id="FNUC190304:G1FZS-376-MONOMER"/>
<dbReference type="Proteomes" id="UP000002521">
    <property type="component" value="Chromosome"/>
</dbReference>
<dbReference type="GO" id="GO:0005829">
    <property type="term" value="C:cytosol"/>
    <property type="evidence" value="ECO:0000318"/>
    <property type="project" value="GO_Central"/>
</dbReference>
<dbReference type="GO" id="GO:0015935">
    <property type="term" value="C:small ribosomal subunit"/>
    <property type="evidence" value="ECO:0000318"/>
    <property type="project" value="GO_Central"/>
</dbReference>
<dbReference type="GO" id="GO:0070181">
    <property type="term" value="F:small ribosomal subunit rRNA binding"/>
    <property type="evidence" value="ECO:0000318"/>
    <property type="project" value="GO_Central"/>
</dbReference>
<dbReference type="GO" id="GO:0003735">
    <property type="term" value="F:structural constituent of ribosome"/>
    <property type="evidence" value="ECO:0007669"/>
    <property type="project" value="InterPro"/>
</dbReference>
<dbReference type="GO" id="GO:0006412">
    <property type="term" value="P:translation"/>
    <property type="evidence" value="ECO:0007669"/>
    <property type="project" value="UniProtKB-UniRule"/>
</dbReference>
<dbReference type="FunFam" id="1.20.58.110:FF:000001">
    <property type="entry name" value="30S ribosomal protein S20"/>
    <property type="match status" value="1"/>
</dbReference>
<dbReference type="Gene3D" id="1.20.58.110">
    <property type="entry name" value="Ribosomal protein S20"/>
    <property type="match status" value="1"/>
</dbReference>
<dbReference type="HAMAP" id="MF_00500">
    <property type="entry name" value="Ribosomal_bS20"/>
    <property type="match status" value="1"/>
</dbReference>
<dbReference type="InterPro" id="IPR002583">
    <property type="entry name" value="Ribosomal_bS20"/>
</dbReference>
<dbReference type="InterPro" id="IPR036510">
    <property type="entry name" value="Ribosomal_bS20_sf"/>
</dbReference>
<dbReference type="NCBIfam" id="TIGR00029">
    <property type="entry name" value="S20"/>
    <property type="match status" value="1"/>
</dbReference>
<dbReference type="PANTHER" id="PTHR33398">
    <property type="entry name" value="30S RIBOSOMAL PROTEIN S20"/>
    <property type="match status" value="1"/>
</dbReference>
<dbReference type="PANTHER" id="PTHR33398:SF1">
    <property type="entry name" value="SMALL RIBOSOMAL SUBUNIT PROTEIN BS20C"/>
    <property type="match status" value="1"/>
</dbReference>
<dbReference type="Pfam" id="PF01649">
    <property type="entry name" value="Ribosomal_S20p"/>
    <property type="match status" value="1"/>
</dbReference>
<dbReference type="SUPFAM" id="SSF46992">
    <property type="entry name" value="Ribosomal protein S20"/>
    <property type="match status" value="1"/>
</dbReference>
<name>RS20_FUSNN</name>
<accession>Q8RHW1</accession>
<proteinExistence type="inferred from homology"/>
<protein>
    <recommendedName>
        <fullName evidence="1">Small ribosomal subunit protein bS20</fullName>
    </recommendedName>
    <alternativeName>
        <fullName evidence="2">30S ribosomal protein S20</fullName>
    </alternativeName>
</protein>
<feature type="chain" id="PRO_0000167963" description="Small ribosomal subunit protein bS20">
    <location>
        <begin position="1"/>
        <end position="90"/>
    </location>
</feature>
<keyword id="KW-1185">Reference proteome</keyword>
<keyword id="KW-0687">Ribonucleoprotein</keyword>
<keyword id="KW-0689">Ribosomal protein</keyword>
<keyword id="KW-0694">RNA-binding</keyword>
<keyword id="KW-0699">rRNA-binding</keyword>